<organism>
    <name type="scientific">Glycine max</name>
    <name type="common">Soybean</name>
    <name type="synonym">Glycine hispida</name>
    <dbReference type="NCBI Taxonomy" id="3847"/>
    <lineage>
        <taxon>Eukaryota</taxon>
        <taxon>Viridiplantae</taxon>
        <taxon>Streptophyta</taxon>
        <taxon>Embryophyta</taxon>
        <taxon>Tracheophyta</taxon>
        <taxon>Spermatophyta</taxon>
        <taxon>Magnoliopsida</taxon>
        <taxon>eudicotyledons</taxon>
        <taxon>Gunneridae</taxon>
        <taxon>Pentapetalae</taxon>
        <taxon>rosids</taxon>
        <taxon>fabids</taxon>
        <taxon>Fabales</taxon>
        <taxon>Fabaceae</taxon>
        <taxon>Papilionoideae</taxon>
        <taxon>50 kb inversion clade</taxon>
        <taxon>NPAAA clade</taxon>
        <taxon>indigoferoid/millettioid clade</taxon>
        <taxon>Phaseoleae</taxon>
        <taxon>Glycine</taxon>
        <taxon>Glycine subgen. Soja</taxon>
    </lineage>
</organism>
<protein>
    <recommendedName>
        <fullName>Elongation factor G-2, chloroplastic</fullName>
        <shortName evidence="1">cEF-G 2</shortName>
    </recommendedName>
</protein>
<reference key="1">
    <citation type="journal article" date="2010" name="Nature">
        <title>Genome sequence of the palaeopolyploid soybean.</title>
        <authorList>
            <person name="Schmutz J."/>
            <person name="Cannon S.B."/>
            <person name="Schlueter J."/>
            <person name="Ma J."/>
            <person name="Mitros T."/>
            <person name="Nelson W."/>
            <person name="Hyten D.L."/>
            <person name="Song Q."/>
            <person name="Thelen J.J."/>
            <person name="Cheng J."/>
            <person name="Xu D."/>
            <person name="Hellsten U."/>
            <person name="May G.D."/>
            <person name="Yu Y."/>
            <person name="Sakurai T."/>
            <person name="Umezawa T."/>
            <person name="Bhattacharyya M.K."/>
            <person name="Sandhu D."/>
            <person name="Valliyodan B."/>
            <person name="Lindquist E."/>
            <person name="Peto M."/>
            <person name="Grant D."/>
            <person name="Shu S."/>
            <person name="Goodstein D."/>
            <person name="Barry K."/>
            <person name="Futrell-Griggs M."/>
            <person name="Abernathy B."/>
            <person name="Du J."/>
            <person name="Tian Z."/>
            <person name="Zhu L."/>
            <person name="Gill N."/>
            <person name="Joshi T."/>
            <person name="Libault M."/>
            <person name="Sethuraman A."/>
            <person name="Zhang X.-C."/>
            <person name="Shinozaki K."/>
            <person name="Nguyen H.T."/>
            <person name="Wing R.A."/>
            <person name="Cregan P."/>
            <person name="Specht J."/>
            <person name="Grimwood J."/>
            <person name="Rokhsar D."/>
            <person name="Stacey G."/>
            <person name="Shoemaker R.C."/>
            <person name="Jackson S.A."/>
        </authorList>
    </citation>
    <scope>NUCLEOTIDE SEQUENCE [LARGE SCALE GENOMIC DNA]</scope>
    <source>
        <strain>cv. Williams 82</strain>
    </source>
</reference>
<reference key="2">
    <citation type="journal article" date="1993" name="Biochim. Biophys. Acta">
        <title>Cloning and sequencing of a soybean nuclear gene coding for a chloroplast translation elongation factor EF-G.</title>
        <authorList>
            <person name="Torres J.H."/>
            <person name="Breitenberger C.A."/>
            <person name="Spielmann A."/>
            <person name="Stutz E."/>
        </authorList>
    </citation>
    <scope>IDENTIFICATION</scope>
</reference>
<feature type="transit peptide" description="Chloroplast" evidence="1">
    <location>
        <begin position="1"/>
        <end position="79"/>
    </location>
</feature>
<feature type="chain" id="PRO_0000425112" description="Elongation factor G-2, chloroplastic">
    <location>
        <begin position="80"/>
        <end position="780"/>
    </location>
</feature>
<feature type="domain" description="tr-type G">
    <location>
        <begin position="91"/>
        <end position="366"/>
    </location>
</feature>
<feature type="binding site" evidence="1">
    <location>
        <begin position="100"/>
        <end position="107"/>
    </location>
    <ligand>
        <name>GTP</name>
        <dbReference type="ChEBI" id="CHEBI:37565"/>
    </ligand>
</feature>
<feature type="binding site" evidence="1">
    <location>
        <begin position="164"/>
        <end position="168"/>
    </location>
    <ligand>
        <name>GTP</name>
        <dbReference type="ChEBI" id="CHEBI:37565"/>
    </ligand>
</feature>
<feature type="binding site" evidence="1">
    <location>
        <begin position="218"/>
        <end position="221"/>
    </location>
    <ligand>
        <name>GTP</name>
        <dbReference type="ChEBI" id="CHEBI:37565"/>
    </ligand>
</feature>
<keyword id="KW-0150">Chloroplast</keyword>
<keyword id="KW-0251">Elongation factor</keyword>
<keyword id="KW-0342">GTP-binding</keyword>
<keyword id="KW-0547">Nucleotide-binding</keyword>
<keyword id="KW-0934">Plastid</keyword>
<keyword id="KW-0648">Protein biosynthesis</keyword>
<keyword id="KW-1185">Reference proteome</keyword>
<keyword id="KW-0809">Transit peptide</keyword>
<gene>
    <name type="primary">fusA2</name>
</gene>
<accession>I1K0K6</accession>
<evidence type="ECO:0000255" key="1">
    <source>
        <dbReference type="HAMAP-Rule" id="MF_03063"/>
    </source>
</evidence>
<name>EFGC2_SOYBN</name>
<proteinExistence type="inferred from homology"/>
<dbReference type="RefSeq" id="XP_006579622.1">
    <property type="nucleotide sequence ID" value="XM_006579559.2"/>
</dbReference>
<dbReference type="SMR" id="I1K0K6"/>
<dbReference type="FunCoup" id="I1K0K6">
    <property type="interactions" value="1789"/>
</dbReference>
<dbReference type="STRING" id="3847.I1K0K6"/>
<dbReference type="PaxDb" id="3847-GLYMA05G04210.1"/>
<dbReference type="EnsemblPlants" id="KRH57341">
    <property type="protein sequence ID" value="KRH57341"/>
    <property type="gene ID" value="GLYMA_05G055500"/>
</dbReference>
<dbReference type="Gramene" id="KRH57341">
    <property type="protein sequence ID" value="KRH57341"/>
    <property type="gene ID" value="GLYMA_05G055500"/>
</dbReference>
<dbReference type="eggNOG" id="KOG0465">
    <property type="taxonomic scope" value="Eukaryota"/>
</dbReference>
<dbReference type="HOGENOM" id="CLU_002794_4_1_1"/>
<dbReference type="InParanoid" id="I1K0K6"/>
<dbReference type="OMA" id="YAGNIMG"/>
<dbReference type="OrthoDB" id="198619at2759"/>
<dbReference type="UniPathway" id="UPA00345"/>
<dbReference type="Proteomes" id="UP000008827">
    <property type="component" value="Chromosome 5"/>
</dbReference>
<dbReference type="GO" id="GO:0009507">
    <property type="term" value="C:chloroplast"/>
    <property type="evidence" value="ECO:0007669"/>
    <property type="project" value="UniProtKB-SubCell"/>
</dbReference>
<dbReference type="GO" id="GO:0005525">
    <property type="term" value="F:GTP binding"/>
    <property type="evidence" value="ECO:0007669"/>
    <property type="project" value="UniProtKB-UniRule"/>
</dbReference>
<dbReference type="GO" id="GO:0003924">
    <property type="term" value="F:GTPase activity"/>
    <property type="evidence" value="ECO:0007669"/>
    <property type="project" value="UniProtKB-UniRule"/>
</dbReference>
<dbReference type="GO" id="GO:0003746">
    <property type="term" value="F:translation elongation factor activity"/>
    <property type="evidence" value="ECO:0007669"/>
    <property type="project" value="UniProtKB-UniRule"/>
</dbReference>
<dbReference type="GO" id="GO:0032790">
    <property type="term" value="P:ribosome disassembly"/>
    <property type="evidence" value="ECO:0000318"/>
    <property type="project" value="GO_Central"/>
</dbReference>
<dbReference type="CDD" id="cd01886">
    <property type="entry name" value="EF-G"/>
    <property type="match status" value="1"/>
</dbReference>
<dbReference type="CDD" id="cd16262">
    <property type="entry name" value="EFG_III"/>
    <property type="match status" value="1"/>
</dbReference>
<dbReference type="CDD" id="cd01434">
    <property type="entry name" value="EFG_mtEFG1_IV"/>
    <property type="match status" value="1"/>
</dbReference>
<dbReference type="CDD" id="cd03713">
    <property type="entry name" value="EFG_mtEFG_C"/>
    <property type="match status" value="1"/>
</dbReference>
<dbReference type="CDD" id="cd04088">
    <property type="entry name" value="EFG_mtEFG_II"/>
    <property type="match status" value="1"/>
</dbReference>
<dbReference type="FunFam" id="2.40.30.10:FF:000006">
    <property type="entry name" value="Elongation factor G"/>
    <property type="match status" value="1"/>
</dbReference>
<dbReference type="FunFam" id="3.30.230.10:FF:000003">
    <property type="entry name" value="Elongation factor G"/>
    <property type="match status" value="1"/>
</dbReference>
<dbReference type="FunFam" id="3.30.70.240:FF:000001">
    <property type="entry name" value="Elongation factor G"/>
    <property type="match status" value="1"/>
</dbReference>
<dbReference type="FunFam" id="3.30.70.870:FF:000001">
    <property type="entry name" value="Elongation factor G"/>
    <property type="match status" value="1"/>
</dbReference>
<dbReference type="FunFam" id="3.40.50.300:FF:000029">
    <property type="entry name" value="Elongation factor G"/>
    <property type="match status" value="1"/>
</dbReference>
<dbReference type="Gene3D" id="3.30.230.10">
    <property type="match status" value="1"/>
</dbReference>
<dbReference type="Gene3D" id="3.30.70.240">
    <property type="match status" value="1"/>
</dbReference>
<dbReference type="Gene3D" id="3.30.70.870">
    <property type="entry name" value="Elongation Factor G (Translational Gtpase), domain 3"/>
    <property type="match status" value="1"/>
</dbReference>
<dbReference type="Gene3D" id="3.40.50.300">
    <property type="entry name" value="P-loop containing nucleotide triphosphate hydrolases"/>
    <property type="match status" value="1"/>
</dbReference>
<dbReference type="Gene3D" id="2.40.30.10">
    <property type="entry name" value="Translation factors"/>
    <property type="match status" value="1"/>
</dbReference>
<dbReference type="HAMAP" id="MF_00054_B">
    <property type="entry name" value="EF_G_EF_2_B"/>
    <property type="match status" value="1"/>
</dbReference>
<dbReference type="HAMAP" id="MF_03063">
    <property type="entry name" value="EF_G_plantC"/>
    <property type="match status" value="1"/>
</dbReference>
<dbReference type="InterPro" id="IPR030848">
    <property type="entry name" value="EF_G_plantC"/>
</dbReference>
<dbReference type="InterPro" id="IPR041095">
    <property type="entry name" value="EFG_II"/>
</dbReference>
<dbReference type="InterPro" id="IPR009022">
    <property type="entry name" value="EFG_III"/>
</dbReference>
<dbReference type="InterPro" id="IPR035647">
    <property type="entry name" value="EFG_III/V"/>
</dbReference>
<dbReference type="InterPro" id="IPR047872">
    <property type="entry name" value="EFG_IV"/>
</dbReference>
<dbReference type="InterPro" id="IPR035649">
    <property type="entry name" value="EFG_V"/>
</dbReference>
<dbReference type="InterPro" id="IPR000640">
    <property type="entry name" value="EFG_V-like"/>
</dbReference>
<dbReference type="InterPro" id="IPR004161">
    <property type="entry name" value="EFTu-like_2"/>
</dbReference>
<dbReference type="InterPro" id="IPR031157">
    <property type="entry name" value="G_TR_CS"/>
</dbReference>
<dbReference type="InterPro" id="IPR027417">
    <property type="entry name" value="P-loop_NTPase"/>
</dbReference>
<dbReference type="InterPro" id="IPR020568">
    <property type="entry name" value="Ribosomal_Su5_D2-typ_SF"/>
</dbReference>
<dbReference type="InterPro" id="IPR014721">
    <property type="entry name" value="Ribsml_uS5_D2-typ_fold_subgr"/>
</dbReference>
<dbReference type="InterPro" id="IPR005225">
    <property type="entry name" value="Small_GTP-bd"/>
</dbReference>
<dbReference type="InterPro" id="IPR000795">
    <property type="entry name" value="T_Tr_GTP-bd_dom"/>
</dbReference>
<dbReference type="InterPro" id="IPR009000">
    <property type="entry name" value="Transl_B-barrel_sf"/>
</dbReference>
<dbReference type="InterPro" id="IPR004540">
    <property type="entry name" value="Transl_elong_EFG/EF2"/>
</dbReference>
<dbReference type="InterPro" id="IPR005517">
    <property type="entry name" value="Transl_elong_EFG/EF2_IV"/>
</dbReference>
<dbReference type="NCBIfam" id="TIGR00484">
    <property type="entry name" value="EF-G"/>
    <property type="match status" value="1"/>
</dbReference>
<dbReference type="NCBIfam" id="NF009379">
    <property type="entry name" value="PRK12740.1-3"/>
    <property type="match status" value="1"/>
</dbReference>
<dbReference type="NCBIfam" id="NF009381">
    <property type="entry name" value="PRK12740.1-5"/>
    <property type="match status" value="1"/>
</dbReference>
<dbReference type="NCBIfam" id="TIGR00231">
    <property type="entry name" value="small_GTP"/>
    <property type="match status" value="1"/>
</dbReference>
<dbReference type="PANTHER" id="PTHR43261:SF1">
    <property type="entry name" value="RIBOSOME-RELEASING FACTOR 2, MITOCHONDRIAL"/>
    <property type="match status" value="1"/>
</dbReference>
<dbReference type="PANTHER" id="PTHR43261">
    <property type="entry name" value="TRANSLATION ELONGATION FACTOR G-RELATED"/>
    <property type="match status" value="1"/>
</dbReference>
<dbReference type="Pfam" id="PF00679">
    <property type="entry name" value="EFG_C"/>
    <property type="match status" value="1"/>
</dbReference>
<dbReference type="Pfam" id="PF14492">
    <property type="entry name" value="EFG_III"/>
    <property type="match status" value="1"/>
</dbReference>
<dbReference type="Pfam" id="PF03764">
    <property type="entry name" value="EFG_IV"/>
    <property type="match status" value="1"/>
</dbReference>
<dbReference type="Pfam" id="PF00009">
    <property type="entry name" value="GTP_EFTU"/>
    <property type="match status" value="1"/>
</dbReference>
<dbReference type="Pfam" id="PF03144">
    <property type="entry name" value="GTP_EFTU_D2"/>
    <property type="match status" value="1"/>
</dbReference>
<dbReference type="PRINTS" id="PR00315">
    <property type="entry name" value="ELONGATNFCT"/>
</dbReference>
<dbReference type="SMART" id="SM00838">
    <property type="entry name" value="EFG_C"/>
    <property type="match status" value="1"/>
</dbReference>
<dbReference type="SMART" id="SM00889">
    <property type="entry name" value="EFG_IV"/>
    <property type="match status" value="1"/>
</dbReference>
<dbReference type="SUPFAM" id="SSF54980">
    <property type="entry name" value="EF-G C-terminal domain-like"/>
    <property type="match status" value="2"/>
</dbReference>
<dbReference type="SUPFAM" id="SSF52540">
    <property type="entry name" value="P-loop containing nucleoside triphosphate hydrolases"/>
    <property type="match status" value="1"/>
</dbReference>
<dbReference type="SUPFAM" id="SSF54211">
    <property type="entry name" value="Ribosomal protein S5 domain 2-like"/>
    <property type="match status" value="1"/>
</dbReference>
<dbReference type="SUPFAM" id="SSF50447">
    <property type="entry name" value="Translation proteins"/>
    <property type="match status" value="1"/>
</dbReference>
<dbReference type="PROSITE" id="PS00301">
    <property type="entry name" value="G_TR_1"/>
    <property type="match status" value="1"/>
</dbReference>
<dbReference type="PROSITE" id="PS51722">
    <property type="entry name" value="G_TR_2"/>
    <property type="match status" value="1"/>
</dbReference>
<comment type="function">
    <text evidence="1">Chloroplast-localized elongation factor EF-G involved in protein synthesis in plastids. Catalyzes the GTP-dependent ribosomal translocation step during translation elongation. During this step, the ribosome changes from the pre-translocational (PRE) to the post-translocational (POST) state as the newly formed A-site-bound peptidyl-tRNA and P-site-bound deacylated tRNA move to the P and E sites, respectively. Catalyzes the coordinated movement of the two tRNA molecules, the mRNA and conformational changes in the ribosome.</text>
</comment>
<comment type="pathway">
    <text evidence="1">Protein biosynthesis; polypeptide chain elongation.</text>
</comment>
<comment type="subcellular location">
    <subcellularLocation>
        <location evidence="1">Plastid</location>
        <location evidence="1">Chloroplast</location>
    </subcellularLocation>
</comment>
<comment type="similarity">
    <text evidence="1">Belongs to the TRAFAC class translation factor GTPase superfamily. Classic translation factor GTPase family. EF-G/EF-2 subfamily.</text>
</comment>
<sequence>MAAESSLRVATPTICNLNGSQRRPTTLSPLRFMGFSPRPSHSLTSSSLSHFFGSTRINSNSSSISRQHAPRRNFSVFAMSGDDAKRSVPLKDYRNIGIMAHIDAGKTTTTERILYYTGRNYKIGEVHEGTATMDWMEQEQERGITITSAATTTFWNKHRINIIDTPGHVDFTLEVERALRVLDGAICLFDSVAGVEPQSETVWRQADKYGVPRICFVNKMDRLGANFYRTRDMIVTNLGAKPLVIQLPIGSEDNFKGVIDLVRNKAIVWSGEELGAKFDIVDVPEDLQEQAQEYRAQMIETIVEFDDQAMENYLEGIEPDEETIKKLIRKGTISASFVPVMCGSAFKNKGVQPLLDAVVDYLPSPLDLPAMKGSDPENPEETIERVASDDEPFAGLAFKIMSDPFVGSLTFVRVYAGKLSAGSYVLNANKGKKERIGRLLEMHANSREDVKVALAGDIIALAGLKDTITGETLCDPDNPIVLERMDFPDPVIKVAIEPKTKADVDKMATGLIKLAQEDPSFHFSRDEEINQTVIEGMGELHLEIIVDRLKREFKVEANVGAPQVNYRESISKTAEVKYVHKKQSGGQGQFADITVRFEPMDPGSGYEFKSEIKGGAVPKEYIPGVMKGLEECMSNGVLAGFPVVDVRAVLTDGSYHDVDSSVLAFQLAARGAFREGIRKAGPRMLEPIMKVEVVTPEEHLGDVIGDLNSRRGQINSFGDKPGGLKVVDALVPLAEMFQYVSTLRGMTKGRASYTMQLAMFDVVPQHIQNQLATKEQEVAA</sequence>